<proteinExistence type="evidence at protein level"/>
<gene>
    <name type="primary">HERC5</name>
    <name type="synonym">CEB1</name>
    <name type="synonym">CEBP1</name>
</gene>
<feature type="chain" id="PRO_0000206641" description="E3 ISG15--protein ligase HERC5">
    <location>
        <begin position="1"/>
        <end position="1024"/>
    </location>
</feature>
<feature type="repeat" description="RCC1 1">
    <location>
        <begin position="96"/>
        <end position="155"/>
    </location>
</feature>
<feature type="repeat" description="RCC1 2">
    <location>
        <begin position="156"/>
        <end position="208"/>
    </location>
</feature>
<feature type="repeat" description="RCC1 3">
    <location>
        <begin position="209"/>
        <end position="260"/>
    </location>
</feature>
<feature type="repeat" description="RCC1 4">
    <location>
        <begin position="262"/>
        <end position="312"/>
    </location>
</feature>
<feature type="repeat" description="RCC1 5">
    <location>
        <begin position="314"/>
        <end position="364"/>
    </location>
</feature>
<feature type="domain" description="HECT" evidence="1">
    <location>
        <begin position="702"/>
        <end position="1024"/>
    </location>
</feature>
<feature type="region of interest" description="Disordered" evidence="2">
    <location>
        <begin position="1"/>
        <end position="28"/>
    </location>
</feature>
<feature type="compositionally biased region" description="Basic residues" evidence="2">
    <location>
        <begin position="1"/>
        <end position="13"/>
    </location>
</feature>
<feature type="active site" description="Glycyl thioester intermediate" evidence="1">
    <location>
        <position position="994"/>
    </location>
</feature>
<feature type="sequence variant" id="VAR_057123" description="In dbSNP:rs17014143.">
    <original>A</original>
    <variation>T</variation>
    <location>
        <position position="301"/>
    </location>
</feature>
<feature type="mutagenesis site" description="Loss of activity; no effect on IRF3 interaction." evidence="4 5 6 9 10 11 12 17">
    <original>C</original>
    <variation>A</variation>
    <location>
        <position position="994"/>
    </location>
</feature>
<feature type="sequence conflict" description="In Ref. 2; AAR00320." evidence="19" ref="2">
    <original>M</original>
    <variation>T</variation>
    <location>
        <position position="204"/>
    </location>
</feature>
<feature type="sequence conflict" description="In Ref. 2; AAR00320." evidence="19" ref="2">
    <original>F</original>
    <variation>S</variation>
    <location>
        <position position="419"/>
    </location>
</feature>
<feature type="sequence conflict" description="In Ref. 1; BAA88519." evidence="19" ref="1">
    <original>K</original>
    <variation>R</variation>
    <location>
        <position position="453"/>
    </location>
</feature>
<feature type="sequence conflict" description="In Ref. 1; BAA88519, 2; AAR00320 and 3; AAI40717." evidence="19" ref="1 2 3">
    <original>M</original>
    <variation>V</variation>
    <location>
        <position position="498"/>
    </location>
</feature>
<feature type="sequence conflict" description="In Ref. 2; AAR00320." evidence="19" ref="2">
    <original>A</original>
    <variation>T</variation>
    <location>
        <position position="513"/>
    </location>
</feature>
<feature type="helix" evidence="22">
    <location>
        <begin position="917"/>
        <end position="923"/>
    </location>
</feature>
<feature type="helix" evidence="22">
    <location>
        <begin position="935"/>
        <end position="946"/>
    </location>
</feature>
<feature type="helix" evidence="22">
    <location>
        <begin position="949"/>
        <end position="959"/>
    </location>
</feature>
<feature type="strand" evidence="22">
    <location>
        <begin position="960"/>
        <end position="964"/>
    </location>
</feature>
<feature type="helix" evidence="22">
    <location>
        <begin position="967"/>
        <end position="970"/>
    </location>
</feature>
<feature type="strand" evidence="22">
    <location>
        <begin position="976"/>
        <end position="978"/>
    </location>
</feature>
<feature type="strand" evidence="22">
    <location>
        <begin position="990"/>
        <end position="992"/>
    </location>
</feature>
<feature type="turn" evidence="22">
    <location>
        <begin position="993"/>
        <end position="996"/>
    </location>
</feature>
<feature type="strand" evidence="22">
    <location>
        <begin position="997"/>
        <end position="999"/>
    </location>
</feature>
<feature type="helix" evidence="22">
    <location>
        <begin position="1006"/>
        <end position="1017"/>
    </location>
</feature>
<comment type="function">
    <text evidence="5 6 7 8 9 10 11 12 13 14 15 16 18">Major E3 ligase for ISG15 conjugation (PubMed:26355087, PubMed:27534820, PubMed:27564865, PubMed:34572049, PubMed:37279284). Acts as a positive regulator of innate antiviral response in cells induced by interferon. Functions as part of the ISGylation machinery that recognizes target proteins in a broad and relatively non-specific manner. Catalyzes ISGylation of IRF3 which results in sustained activation, it attenuates IRF3-PIN1 interaction, which antagonizes IRF3 ubiquitination and degradation, and boosts the antiviral response. Mediates ISGylation of the phosphatase PTEN leading to its degradation, thus alleviating its suppression of the PI3K-AKT signaling pathway and promoting the production of cytokines that facilitate bacterial clearance (PubMed:37279284). Interferes with the function of key viral structural proteins such as ebolavirus structural protein VP40 or HIV-1 protein GAG (PubMed:22093708, PubMed:34572049). Catalyzes ISGylation of influenza A viral NS1 which attenuates virulence; ISGylated NS1 fails to form homodimers and thus to interact with its RNA targets. Catalyzes ISGylation of papillomavirus type 16 L1 protein which results in dominant-negative effect on virus infectivity. Physically associated with polyribosomes, broadly modifies newly synthesized proteins in a cotranslational manner. In an interferon-stimulated cell, newly translated viral proteins are primary targets of ISG15. Promotes parkin/PRKN ubiquitin E3 ligase activity by suppressing the intramolecular interaction that maintains its autoinhibited conformation (PubMed:27534820).</text>
</comment>
<comment type="function">
    <text evidence="17">(Microbial infection) Functions as an E3 ligase for ISGylation of hepatitis B virus protein X leading to enhanced viral replication due to increased interferon resistance.</text>
</comment>
<comment type="subunit">
    <text evidence="15">(Microbial infection) Interacts with human cytomegalovirus protein UL26; this interaction inhibits global protein ISGylation.</text>
</comment>
<comment type="subunit">
    <text evidence="13">(Microbial infection) Interacts with Kaposi's sarcoma-associated herpesvirus protein v-IRF1; this interaction inhibits global protein ISGylation.</text>
</comment>
<comment type="subunit">
    <text evidence="3 6 8 9 11">Binds to CCNA1, CCNB1, CCND1 and CCNE1. Interacts with UBE2L6. Interacts with IRF3, this interaction is marginal in resting cells but enhanced upon viral infection. Interacts with influenza A virus NS1.</text>
</comment>
<comment type="interaction">
    <interactant intactId="EBI-2339540">
        <id>Q9UII4</id>
    </interactant>
    <interactant intactId="EBI-2548993">
        <id>P03495</id>
        <label>NS</label>
    </interactant>
    <organismsDiffer>true</organismsDiffer>
    <experiments>3</experiments>
</comment>
<comment type="subcellular location">
    <subcellularLocation>
        <location evidence="11">Cytoplasm</location>
        <location evidence="11">Perinuclear region</location>
    </subcellularLocation>
    <subcellularLocation>
        <location evidence="12">Cytoplasm</location>
    </subcellularLocation>
    <text>Associated with the polyribosomes, probably via the 60S subunit.</text>
</comment>
<comment type="tissue specificity">
    <text evidence="3 4">Expressed in testis and to a lesser degree in brain, ovary and placenta. Found in most tissues at low levels.</text>
</comment>
<comment type="induction">
    <text evidence="4 6">By IFNB1/IFN-beta. In endothelial cells, by TNF, IL1B/interleukin-1B and by bacterial lipopolysaccharides (LPS), hardly induced in other cells of the vascular wall such as primary smooth muscle cells and fibroblasts. By viral infection.</text>
</comment>
<comment type="PTM">
    <text evidence="21">ISGylated.</text>
</comment>
<comment type="caution">
    <text evidence="20">Was thought to be a ubiquitin ligase ubiquitinated by UBE2D1, but was confirmed by numerous studies that it's main function is as E3 ISG15 ligase.</text>
</comment>
<sequence length="1024" mass="116852">MERRSRRKSRRNGRSTAGKAAATQPAKSPGAQLWLFPSAAGLHRALLRRVEVTRQLCCSPGRLAVLERGGAGVQVHQLLAGSGGARTPKCIKLGKNMKIHSVDQGAEHMLILSSDGKPFEYDNYSMKHLRFESILQEKKIIQITCGDYHSLALSKGGELFAWGQNLHGQLGVGRKFPSTTTPQIVEHLAGVPLAQISAGEAHSMALSMSGNIYSWGKNECGQLGLGHTESKDDPSLIEGLDNQKVEFVACGGSHSALLTQDGLLFTFGAGKHGQLGHNSTQNELRPCLVAELVGYRVTQIACGRWHTLAYVSDLGKVFSFGSGKDGQLGNGGTRDQLMPLPVKVSSSEELKLESHTSEKELIMIAGGNQSILLWIKKENSYVNLKRTIPTLNEGTVKRWIADVETKRWQSTKREIQEIFSSPACLTGSFLRKRRTTEMMPVYLDLNKARNIFKELTQKDWITNMITTCLKDNLLKRLPFHSPPQEALEIFFLLPECPMMHISNNWESLVVPFAKVVCKMSDQSSLVLEEYWATLQESTFSKLVQMFKTAVICQLDYWDESAEENGNVQALLEMLKKLHRVNQVKCQLPESIFQVDELLHRLNFFVEVCRRYLWKMTVDASENVQCCVIFSHFPFIFNNLSKIKLLHTDTLLKIESKKHKAYLRSAAIEEERESEFALRPTFDLTVRRNHLIEDVLNQLSQFENEDLRKELWVSFSGEIGYDLGGVKKEFFYCLFAEMIQPEYGMFMYPEGASCMWFPVKPKFEKKRYFFFGVLCGLSLFNCNVANLPFPLALFKKLLDQMPSLEDLKELSPDLGKNLQTLLDDEGDNFEEVFYIHFNVHWDRNDTNLIPNGSSITVNQTNKRDYVSKYINYIFNDSVKAVYEEFRRGFYKMCDEDIIKLFHPEELKDVIVGNTDYDWKTFEKNARYEPGYNSSHPTIVMFWKAFHKLTLEEKKKFLVFLTGTDRLQMKDLNNMKITFCCPESWNERDPIRALTCFSVLFLPKYSTMETVEEALQEAINNNRGFG</sequence>
<name>HERC5_HUMAN</name>
<evidence type="ECO:0000255" key="1">
    <source>
        <dbReference type="PROSITE-ProRule" id="PRU00104"/>
    </source>
</evidence>
<evidence type="ECO:0000256" key="2">
    <source>
        <dbReference type="SAM" id="MobiDB-lite"/>
    </source>
</evidence>
<evidence type="ECO:0000269" key="3">
    <source>
    </source>
</evidence>
<evidence type="ECO:0000269" key="4">
    <source>
    </source>
</evidence>
<evidence type="ECO:0000269" key="5">
    <source>
    </source>
</evidence>
<evidence type="ECO:0000269" key="6">
    <source>
    </source>
</evidence>
<evidence type="ECO:0000269" key="7">
    <source>
    </source>
</evidence>
<evidence type="ECO:0000269" key="8">
    <source>
    </source>
</evidence>
<evidence type="ECO:0000269" key="9">
    <source>
    </source>
</evidence>
<evidence type="ECO:0000269" key="10">
    <source>
    </source>
</evidence>
<evidence type="ECO:0000269" key="11">
    <source>
    </source>
</evidence>
<evidence type="ECO:0000269" key="12">
    <source>
    </source>
</evidence>
<evidence type="ECO:0000269" key="13">
    <source>
    </source>
</evidence>
<evidence type="ECO:0000269" key="14">
    <source>
    </source>
</evidence>
<evidence type="ECO:0000269" key="15">
    <source>
    </source>
</evidence>
<evidence type="ECO:0000269" key="16">
    <source>
    </source>
</evidence>
<evidence type="ECO:0000269" key="17">
    <source>
    </source>
</evidence>
<evidence type="ECO:0000269" key="18">
    <source>
    </source>
</evidence>
<evidence type="ECO:0000305" key="19"/>
<evidence type="ECO:0000305" key="20">
    <source>
    </source>
</evidence>
<evidence type="ECO:0000305" key="21">
    <source>
    </source>
</evidence>
<evidence type="ECO:0007829" key="22">
    <source>
        <dbReference type="PDB" id="8Y4Z"/>
    </source>
</evidence>
<protein>
    <recommendedName>
        <fullName>E3 ISG15--protein ligase HERC5</fullName>
        <ecNumber evidence="14">2.3.2.-</ecNumber>
    </recommendedName>
    <alternativeName>
        <fullName>Cyclin-E-binding protein 1</fullName>
    </alternativeName>
    <alternativeName>
        <fullName>HECT domain and RCC1-like domain-containing protein 5</fullName>
    </alternativeName>
</protein>
<dbReference type="EC" id="2.3.2.-" evidence="14"/>
<dbReference type="EMBL" id="AB027289">
    <property type="protein sequence ID" value="BAA88519.1"/>
    <property type="molecule type" value="mRNA"/>
</dbReference>
<dbReference type="EMBL" id="AY337518">
    <property type="protein sequence ID" value="AAR00320.1"/>
    <property type="molecule type" value="mRNA"/>
</dbReference>
<dbReference type="EMBL" id="AC083829">
    <property type="status" value="NOT_ANNOTATED_CDS"/>
    <property type="molecule type" value="Genomic_DNA"/>
</dbReference>
<dbReference type="EMBL" id="BC140716">
    <property type="protein sequence ID" value="AAI40717.1"/>
    <property type="molecule type" value="mRNA"/>
</dbReference>
<dbReference type="CCDS" id="CCDS3630.1"/>
<dbReference type="RefSeq" id="NP_057407.2">
    <property type="nucleotide sequence ID" value="NM_016323.4"/>
</dbReference>
<dbReference type="PDB" id="8Y4Z">
    <property type="method" value="NMR"/>
    <property type="chains" value="A=911-1024"/>
</dbReference>
<dbReference type="PDBsum" id="8Y4Z"/>
<dbReference type="SMR" id="Q9UII4"/>
<dbReference type="BioGRID" id="119365">
    <property type="interactions" value="268"/>
</dbReference>
<dbReference type="DIP" id="DIP-44200N"/>
<dbReference type="FunCoup" id="Q9UII4">
    <property type="interactions" value="751"/>
</dbReference>
<dbReference type="IntAct" id="Q9UII4">
    <property type="interactions" value="85"/>
</dbReference>
<dbReference type="MINT" id="Q9UII4"/>
<dbReference type="STRING" id="9606.ENSP00000264350"/>
<dbReference type="GlyGen" id="Q9UII4">
    <property type="glycosylation" value="1 site, 1 O-linked glycan (1 site)"/>
</dbReference>
<dbReference type="iPTMnet" id="Q9UII4"/>
<dbReference type="PhosphoSitePlus" id="Q9UII4"/>
<dbReference type="SwissPalm" id="Q9UII4"/>
<dbReference type="BioMuta" id="HERC5"/>
<dbReference type="DMDM" id="296434523"/>
<dbReference type="jPOST" id="Q9UII4"/>
<dbReference type="MassIVE" id="Q9UII4"/>
<dbReference type="PaxDb" id="9606-ENSP00000264350"/>
<dbReference type="PeptideAtlas" id="Q9UII4"/>
<dbReference type="ProteomicsDB" id="84527"/>
<dbReference type="Pumba" id="Q9UII4"/>
<dbReference type="Antibodypedia" id="25627">
    <property type="antibodies" value="89 antibodies from 24 providers"/>
</dbReference>
<dbReference type="DNASU" id="51191"/>
<dbReference type="Ensembl" id="ENST00000264350.8">
    <property type="protein sequence ID" value="ENSP00000264350.3"/>
    <property type="gene ID" value="ENSG00000138646.9"/>
</dbReference>
<dbReference type="GeneID" id="51191"/>
<dbReference type="KEGG" id="hsa:51191"/>
<dbReference type="MANE-Select" id="ENST00000264350.8">
    <property type="protein sequence ID" value="ENSP00000264350.3"/>
    <property type="RefSeq nucleotide sequence ID" value="NM_016323.4"/>
    <property type="RefSeq protein sequence ID" value="NP_057407.2"/>
</dbReference>
<dbReference type="UCSC" id="uc003hrt.5">
    <property type="organism name" value="human"/>
</dbReference>
<dbReference type="AGR" id="HGNC:24368"/>
<dbReference type="CTD" id="51191"/>
<dbReference type="DisGeNET" id="51191"/>
<dbReference type="GeneCards" id="HERC5"/>
<dbReference type="HGNC" id="HGNC:24368">
    <property type="gene designation" value="HERC5"/>
</dbReference>
<dbReference type="HPA" id="ENSG00000138646">
    <property type="expression patterns" value="Tissue enhanced (testis)"/>
</dbReference>
<dbReference type="MIM" id="608242">
    <property type="type" value="gene"/>
</dbReference>
<dbReference type="neXtProt" id="NX_Q9UII4"/>
<dbReference type="OpenTargets" id="ENSG00000138646"/>
<dbReference type="PharmGKB" id="PA134973940"/>
<dbReference type="VEuPathDB" id="HostDB:ENSG00000138646"/>
<dbReference type="eggNOG" id="KOG0941">
    <property type="taxonomic scope" value="Eukaryota"/>
</dbReference>
<dbReference type="GeneTree" id="ENSGT00940000162703"/>
<dbReference type="HOGENOM" id="CLU_002173_5_3_1"/>
<dbReference type="InParanoid" id="Q9UII4"/>
<dbReference type="OMA" id="KHKAYLM"/>
<dbReference type="OrthoDB" id="8068875at2759"/>
<dbReference type="PAN-GO" id="Q9UII4">
    <property type="GO annotations" value="6 GO annotations based on evolutionary models"/>
</dbReference>
<dbReference type="PhylomeDB" id="Q9UII4"/>
<dbReference type="TreeFam" id="TF315189"/>
<dbReference type="PathwayCommons" id="Q9UII4"/>
<dbReference type="Reactome" id="R-HSA-1169408">
    <property type="pathway name" value="ISG15 antiviral mechanism"/>
</dbReference>
<dbReference type="Reactome" id="R-HSA-168928">
    <property type="pathway name" value="DDX58/IFIH1-mediated induction of interferon-alpha/beta"/>
</dbReference>
<dbReference type="Reactome" id="R-HSA-936440">
    <property type="pathway name" value="Negative regulators of DDX58/IFIH1 signaling"/>
</dbReference>
<dbReference type="Reactome" id="R-HSA-983168">
    <property type="pathway name" value="Antigen processing: Ubiquitination &amp; Proteasome degradation"/>
</dbReference>
<dbReference type="Reactome" id="R-HSA-9833110">
    <property type="pathway name" value="RSV-host interactions"/>
</dbReference>
<dbReference type="Reactome" id="R-HSA-9833482">
    <property type="pathway name" value="PKR-mediated signaling"/>
</dbReference>
<dbReference type="Reactome" id="R-HSA-9909505">
    <property type="pathway name" value="Modulation of host responses by IFN-stimulated genes"/>
</dbReference>
<dbReference type="SignaLink" id="Q9UII4"/>
<dbReference type="SIGNOR" id="Q9UII4"/>
<dbReference type="BioGRID-ORCS" id="51191">
    <property type="hits" value="11 hits in 1197 CRISPR screens"/>
</dbReference>
<dbReference type="CD-CODE" id="232F8A39">
    <property type="entry name" value="P-body"/>
</dbReference>
<dbReference type="GeneWiki" id="HERC5"/>
<dbReference type="GenomeRNAi" id="51191"/>
<dbReference type="Pharos" id="Q9UII4">
    <property type="development level" value="Tbio"/>
</dbReference>
<dbReference type="PRO" id="PR:Q9UII4"/>
<dbReference type="Proteomes" id="UP000005640">
    <property type="component" value="Chromosome 4"/>
</dbReference>
<dbReference type="RNAct" id="Q9UII4">
    <property type="molecule type" value="protein"/>
</dbReference>
<dbReference type="Bgee" id="ENSG00000138646">
    <property type="expression patterns" value="Expressed in primordial germ cell in gonad and 161 other cell types or tissues"/>
</dbReference>
<dbReference type="ExpressionAtlas" id="Q9UII4">
    <property type="expression patterns" value="baseline and differential"/>
</dbReference>
<dbReference type="GO" id="GO:0005737">
    <property type="term" value="C:cytoplasm"/>
    <property type="evidence" value="ECO:0000314"/>
    <property type="project" value="MGI"/>
</dbReference>
<dbReference type="GO" id="GO:0005829">
    <property type="term" value="C:cytosol"/>
    <property type="evidence" value="ECO:0000304"/>
    <property type="project" value="Reactome"/>
</dbReference>
<dbReference type="GO" id="GO:0048471">
    <property type="term" value="C:perinuclear region of cytoplasm"/>
    <property type="evidence" value="ECO:0007669"/>
    <property type="project" value="UniProtKB-SubCell"/>
</dbReference>
<dbReference type="GO" id="GO:0042296">
    <property type="term" value="F:ISG15 transferase activity"/>
    <property type="evidence" value="ECO:0000314"/>
    <property type="project" value="UniProtKB"/>
</dbReference>
<dbReference type="GO" id="GO:0003723">
    <property type="term" value="F:RNA binding"/>
    <property type="evidence" value="ECO:0007005"/>
    <property type="project" value="UniProtKB"/>
</dbReference>
<dbReference type="GO" id="GO:0061630">
    <property type="term" value="F:ubiquitin protein ligase activity"/>
    <property type="evidence" value="ECO:0000314"/>
    <property type="project" value="MGI"/>
</dbReference>
<dbReference type="GO" id="GO:0004842">
    <property type="term" value="F:ubiquitin-protein transferase activity"/>
    <property type="evidence" value="ECO:0000304"/>
    <property type="project" value="Reactome"/>
</dbReference>
<dbReference type="GO" id="GO:0051607">
    <property type="term" value="P:defense response to virus"/>
    <property type="evidence" value="ECO:0007669"/>
    <property type="project" value="UniProtKB-KW"/>
</dbReference>
<dbReference type="GO" id="GO:0045087">
    <property type="term" value="P:innate immune response"/>
    <property type="evidence" value="ECO:0000314"/>
    <property type="project" value="UniProt"/>
</dbReference>
<dbReference type="GO" id="GO:0032020">
    <property type="term" value="P:ISG15-protein conjugation"/>
    <property type="evidence" value="ECO:0000314"/>
    <property type="project" value="UniProtKB"/>
</dbReference>
<dbReference type="GO" id="GO:0039585">
    <property type="term" value="P:PKR/eIFalpha signaling"/>
    <property type="evidence" value="ECO:0000304"/>
    <property type="project" value="Reactome"/>
</dbReference>
<dbReference type="GO" id="GO:0016567">
    <property type="term" value="P:protein ubiquitination"/>
    <property type="evidence" value="ECO:0000314"/>
    <property type="project" value="MGI"/>
</dbReference>
<dbReference type="GO" id="GO:0000079">
    <property type="term" value="P:regulation of cyclin-dependent protein serine/threonine kinase activity"/>
    <property type="evidence" value="ECO:0000304"/>
    <property type="project" value="ProtInc"/>
</dbReference>
<dbReference type="GO" id="GO:0050688">
    <property type="term" value="P:regulation of defense response to virus"/>
    <property type="evidence" value="ECO:0000314"/>
    <property type="project" value="UniProtKB"/>
</dbReference>
<dbReference type="GO" id="GO:0006511">
    <property type="term" value="P:ubiquitin-dependent protein catabolic process"/>
    <property type="evidence" value="ECO:0000318"/>
    <property type="project" value="GO_Central"/>
</dbReference>
<dbReference type="CDD" id="cd00078">
    <property type="entry name" value="HECTc"/>
    <property type="match status" value="1"/>
</dbReference>
<dbReference type="FunFam" id="2.130.10.30:FF:000025">
    <property type="entry name" value="HECT and RLD domain containing E3 ubiquitin protein ligase 5"/>
    <property type="match status" value="1"/>
</dbReference>
<dbReference type="FunFam" id="3.30.2160.10:FF:000004">
    <property type="entry name" value="probable E3 ubiquitin-protein ligase HERC4 isoform X1"/>
    <property type="match status" value="1"/>
</dbReference>
<dbReference type="FunFam" id="3.30.2410.10:FF:000003">
    <property type="entry name" value="probable E3 ubiquitin-protein ligase HERC4 isoform X1"/>
    <property type="match status" value="1"/>
</dbReference>
<dbReference type="Gene3D" id="3.30.2160.10">
    <property type="entry name" value="Hect, E3 ligase catalytic domain"/>
    <property type="match status" value="1"/>
</dbReference>
<dbReference type="Gene3D" id="3.30.2410.10">
    <property type="entry name" value="Hect, E3 ligase catalytic domain"/>
    <property type="match status" value="1"/>
</dbReference>
<dbReference type="Gene3D" id="3.90.1750.10">
    <property type="entry name" value="Hect, E3 ligase catalytic domains"/>
    <property type="match status" value="1"/>
</dbReference>
<dbReference type="Gene3D" id="2.130.10.30">
    <property type="entry name" value="Regulator of chromosome condensation 1/beta-lactamase-inhibitor protein II"/>
    <property type="match status" value="1"/>
</dbReference>
<dbReference type="InterPro" id="IPR000569">
    <property type="entry name" value="HECT_dom"/>
</dbReference>
<dbReference type="InterPro" id="IPR035983">
    <property type="entry name" value="Hect_E3_ubiquitin_ligase"/>
</dbReference>
<dbReference type="InterPro" id="IPR009091">
    <property type="entry name" value="RCC1/BLIP-II"/>
</dbReference>
<dbReference type="InterPro" id="IPR000408">
    <property type="entry name" value="Reg_chr_condens"/>
</dbReference>
<dbReference type="InterPro" id="IPR051709">
    <property type="entry name" value="Ub-ligase/GTPase-reg"/>
</dbReference>
<dbReference type="PANTHER" id="PTHR45622:SF7">
    <property type="entry name" value="E3 ISG15--PROTEIN LIGASE HERC5"/>
    <property type="match status" value="1"/>
</dbReference>
<dbReference type="PANTHER" id="PTHR45622">
    <property type="entry name" value="UBIQUITIN-PROTEIN LIGASE E3A-RELATED"/>
    <property type="match status" value="1"/>
</dbReference>
<dbReference type="Pfam" id="PF00632">
    <property type="entry name" value="HECT"/>
    <property type="match status" value="1"/>
</dbReference>
<dbReference type="Pfam" id="PF25390">
    <property type="entry name" value="WD40_RLD"/>
    <property type="match status" value="1"/>
</dbReference>
<dbReference type="PRINTS" id="PR00633">
    <property type="entry name" value="RCCNDNSATION"/>
</dbReference>
<dbReference type="SMART" id="SM00119">
    <property type="entry name" value="HECTc"/>
    <property type="match status" value="1"/>
</dbReference>
<dbReference type="SUPFAM" id="SSF56204">
    <property type="entry name" value="Hect, E3 ligase catalytic domain"/>
    <property type="match status" value="1"/>
</dbReference>
<dbReference type="SUPFAM" id="SSF50985">
    <property type="entry name" value="RCC1/BLIP-II"/>
    <property type="match status" value="1"/>
</dbReference>
<dbReference type="PROSITE" id="PS50237">
    <property type="entry name" value="HECT"/>
    <property type="match status" value="1"/>
</dbReference>
<dbReference type="PROSITE" id="PS00626">
    <property type="entry name" value="RCC1_2"/>
    <property type="match status" value="2"/>
</dbReference>
<dbReference type="PROSITE" id="PS50012">
    <property type="entry name" value="RCC1_3"/>
    <property type="match status" value="4"/>
</dbReference>
<keyword id="KW-0002">3D-structure</keyword>
<keyword id="KW-0051">Antiviral defense</keyword>
<keyword id="KW-0963">Cytoplasm</keyword>
<keyword id="KW-0945">Host-virus interaction</keyword>
<keyword id="KW-0391">Immunity</keyword>
<keyword id="KW-0399">Innate immunity</keyword>
<keyword id="KW-1267">Proteomics identification</keyword>
<keyword id="KW-1185">Reference proteome</keyword>
<keyword id="KW-0677">Repeat</keyword>
<keyword id="KW-0808">Transferase</keyword>
<keyword id="KW-0832">Ubl conjugation</keyword>
<keyword id="KW-0833">Ubl conjugation pathway</keyword>
<reference key="1">
    <citation type="journal article" date="1999" name="Biochem. Biophys. Res. Commun.">
        <title>A novel human gene encoding HECT domain and RCC1-like repeats interacts with cyclins and is potentially regulated by the tumor suppressor proteins.</title>
        <authorList>
            <person name="Mitsui K."/>
            <person name="Nakanishi M."/>
            <person name="Ohtsuka S."/>
            <person name="Norwood T.H."/>
            <person name="Okabayashi K."/>
            <person name="Miyamoto C."/>
            <person name="Tanaka K."/>
            <person name="Yoshimura A."/>
            <person name="Ohtsubo M."/>
        </authorList>
    </citation>
    <scope>NUCLEOTIDE SEQUENCE [MRNA]</scope>
    <scope>TISSUE SPECIFICITY</scope>
    <scope>INTERACTION WITH CCNA1; CCNB1; CCND1 AND CCNE1</scope>
    <source>
        <tissue>Embryonic kidney</tissue>
    </source>
</reference>
<reference key="2">
    <citation type="journal article" date="2004" name="J. Cell Sci.">
        <title>HERC5, a HECT E3 ubiquitin ligase tightly regulated in LPS activated endothelial cells.</title>
        <authorList>
            <person name="Kroismayr R."/>
            <person name="Baranyi U."/>
            <person name="Stehlik C."/>
            <person name="Dorfleutner A."/>
            <person name="Binder B.R."/>
            <person name="Lipp J."/>
        </authorList>
    </citation>
    <scope>NUCLEOTIDE SEQUENCE [MRNA]</scope>
    <scope>MUTAGENESIS OF CYS-994</scope>
    <scope>TISSUE SPECIFICITY</scope>
    <scope>INDUCTION</scope>
</reference>
<reference key="3">
    <citation type="journal article" date="2005" name="Nature">
        <title>Generation and annotation of the DNA sequences of human chromosomes 2 and 4.</title>
        <authorList>
            <person name="Hillier L.W."/>
            <person name="Graves T.A."/>
            <person name="Fulton R.S."/>
            <person name="Fulton L.A."/>
            <person name="Pepin K.H."/>
            <person name="Minx P."/>
            <person name="Wagner-McPherson C."/>
            <person name="Layman D."/>
            <person name="Wylie K."/>
            <person name="Sekhon M."/>
            <person name="Becker M.C."/>
            <person name="Fewell G.A."/>
            <person name="Delehaunty K.D."/>
            <person name="Miner T.L."/>
            <person name="Nash W.E."/>
            <person name="Kremitzki C."/>
            <person name="Oddy L."/>
            <person name="Du H."/>
            <person name="Sun H."/>
            <person name="Bradshaw-Cordum H."/>
            <person name="Ali J."/>
            <person name="Carter J."/>
            <person name="Cordes M."/>
            <person name="Harris A."/>
            <person name="Isak A."/>
            <person name="van Brunt A."/>
            <person name="Nguyen C."/>
            <person name="Du F."/>
            <person name="Courtney L."/>
            <person name="Kalicki J."/>
            <person name="Ozersky P."/>
            <person name="Abbott S."/>
            <person name="Armstrong J."/>
            <person name="Belter E.A."/>
            <person name="Caruso L."/>
            <person name="Cedroni M."/>
            <person name="Cotton M."/>
            <person name="Davidson T."/>
            <person name="Desai A."/>
            <person name="Elliott G."/>
            <person name="Erb T."/>
            <person name="Fronick C."/>
            <person name="Gaige T."/>
            <person name="Haakenson W."/>
            <person name="Haglund K."/>
            <person name="Holmes A."/>
            <person name="Harkins R."/>
            <person name="Kim K."/>
            <person name="Kruchowski S.S."/>
            <person name="Strong C.M."/>
            <person name="Grewal N."/>
            <person name="Goyea E."/>
            <person name="Hou S."/>
            <person name="Levy A."/>
            <person name="Martinka S."/>
            <person name="Mead K."/>
            <person name="McLellan M.D."/>
            <person name="Meyer R."/>
            <person name="Randall-Maher J."/>
            <person name="Tomlinson C."/>
            <person name="Dauphin-Kohlberg S."/>
            <person name="Kozlowicz-Reilly A."/>
            <person name="Shah N."/>
            <person name="Swearengen-Shahid S."/>
            <person name="Snider J."/>
            <person name="Strong J.T."/>
            <person name="Thompson J."/>
            <person name="Yoakum M."/>
            <person name="Leonard S."/>
            <person name="Pearman C."/>
            <person name="Trani L."/>
            <person name="Radionenko M."/>
            <person name="Waligorski J.E."/>
            <person name="Wang C."/>
            <person name="Rock S.M."/>
            <person name="Tin-Wollam A.-M."/>
            <person name="Maupin R."/>
            <person name="Latreille P."/>
            <person name="Wendl M.C."/>
            <person name="Yang S.-P."/>
            <person name="Pohl C."/>
            <person name="Wallis J.W."/>
            <person name="Spieth J."/>
            <person name="Bieri T.A."/>
            <person name="Berkowicz N."/>
            <person name="Nelson J.O."/>
            <person name="Osborne J."/>
            <person name="Ding L."/>
            <person name="Meyer R."/>
            <person name="Sabo A."/>
            <person name="Shotland Y."/>
            <person name="Sinha P."/>
            <person name="Wohldmann P.E."/>
            <person name="Cook L.L."/>
            <person name="Hickenbotham M.T."/>
            <person name="Eldred J."/>
            <person name="Williams D."/>
            <person name="Jones T.A."/>
            <person name="She X."/>
            <person name="Ciccarelli F.D."/>
            <person name="Izaurralde E."/>
            <person name="Taylor J."/>
            <person name="Schmutz J."/>
            <person name="Myers R.M."/>
            <person name="Cox D.R."/>
            <person name="Huang X."/>
            <person name="McPherson J.D."/>
            <person name="Mardis E.R."/>
            <person name="Clifton S.W."/>
            <person name="Warren W.C."/>
            <person name="Chinwalla A.T."/>
            <person name="Eddy S.R."/>
            <person name="Marra M.A."/>
            <person name="Ovcharenko I."/>
            <person name="Furey T.S."/>
            <person name="Miller W."/>
            <person name="Eichler E.E."/>
            <person name="Bork P."/>
            <person name="Suyama M."/>
            <person name="Torrents D."/>
            <person name="Waterston R.H."/>
            <person name="Wilson R.K."/>
        </authorList>
    </citation>
    <scope>NUCLEOTIDE SEQUENCE [LARGE SCALE GENOMIC DNA]</scope>
</reference>
<reference key="4">
    <citation type="journal article" date="2004" name="Genome Res.">
        <title>The status, quality, and expansion of the NIH full-length cDNA project: the Mammalian Gene Collection (MGC).</title>
        <authorList>
            <consortium name="The MGC Project Team"/>
        </authorList>
    </citation>
    <scope>NUCLEOTIDE SEQUENCE [LARGE SCALE MRNA]</scope>
    <source>
        <tissue>Brain</tissue>
    </source>
</reference>
<reference key="5">
    <citation type="journal article" date="2006" name="Biochem. Biophys. Res. Commun.">
        <title>Identification and Herc5-mediated ISGylation of novel target proteins.</title>
        <authorList>
            <person name="Takeuchi T."/>
            <person name="Inoue S."/>
            <person name="Yokosawa H."/>
        </authorList>
    </citation>
    <scope>FUNCTION</scope>
</reference>
<reference key="6">
    <citation type="journal article" date="2006" name="J. Biol. Chem.">
        <title>Herc5, an interferon-induced HECT E3 enzyme, is required for conjugation of ISG15 in human cells.</title>
        <authorList>
            <person name="Dastur A."/>
            <person name="Beaudenon S."/>
            <person name="Kelley M."/>
            <person name="Krug R.M."/>
            <person name="Huibregtse J.M."/>
        </authorList>
    </citation>
    <scope>FUNCTION</scope>
    <scope>MUTAGENESIS OF CYS-994</scope>
</reference>
<reference key="7">
    <citation type="journal article" date="2006" name="Proc. Natl. Acad. Sci. U.S.A.">
        <title>HERC5 is an IFN-induced HECT-type E3 protein ligase that mediates type I IFN-induced ISGylation of protein targets.</title>
        <authorList>
            <person name="Wong J.J."/>
            <person name="Pung Y.F."/>
            <person name="Sze N.S."/>
            <person name="Chin K.C."/>
        </authorList>
    </citation>
    <scope>FUNCTION</scope>
    <scope>MUTAGENESIS OF CYS-994</scope>
    <scope>ISGYLATION</scope>
    <scope>INDUCTION BY IFNB1</scope>
    <scope>INTERACTION WITH ISGYLATED HSPA8 AND TXNRD1</scope>
</reference>
<reference key="8">
    <citation type="journal article" date="2010" name="J. Immunol.">
        <title>Herc5 attenuates influenza A virus by catalyzing ISGylation of viral NS1 protein.</title>
        <authorList>
            <person name="Tang Y."/>
            <person name="Zhong G."/>
            <person name="Zhu L."/>
            <person name="Liu X."/>
            <person name="Shan Y."/>
            <person name="Feng H."/>
            <person name="Bu Z."/>
            <person name="Chen H."/>
            <person name="Wang C."/>
        </authorList>
    </citation>
    <scope>FUNCTION</scope>
    <scope>MUTAGENESIS OF CYS-994</scope>
</reference>
<reference key="9">
    <citation type="journal article" date="2010" name="Mol. Cell. Biol.">
        <title>Positive regulation of interferon regulatory factor 3 activation by Herc5 via ISG15 modification.</title>
        <authorList>
            <person name="Shi H.X."/>
            <person name="Yang K."/>
            <person name="Liu X."/>
            <person name="Liu X.Y."/>
            <person name="Wei B."/>
            <person name="Shan Y.F."/>
            <person name="Zhu L.H."/>
            <person name="Wang C."/>
        </authorList>
    </citation>
    <scope>FUNCTION</scope>
    <scope>MUTAGENESIS OF CYS-994</scope>
    <scope>INTERACTION WITH IRF3</scope>
</reference>
<reference key="10">
    <citation type="journal article" date="2010" name="Mol. Cell">
        <title>The ISG15 conjugation system broadly targets newly synthesized proteins: implications for the antiviral function of ISG15.</title>
        <authorList>
            <person name="Durfee L.A."/>
            <person name="Lyon N."/>
            <person name="Seo K."/>
            <person name="Huibregtsesend J.M."/>
        </authorList>
    </citation>
    <scope>FUNCTION</scope>
    <scope>SUBCELLULAR LOCATION</scope>
    <scope>INTERACTION WITH 60S SUBUNIT</scope>
    <scope>MUTAGENESIS OF CYS-994</scope>
</reference>
<reference key="11">
    <citation type="journal article" date="2010" name="Proc. Natl. Acad. Sci. U.S.A.">
        <title>ISG15 conjugation system targets the viral NS1 protein in influenza A virus-infected cells.</title>
        <authorList>
            <person name="Zhao C."/>
            <person name="Hsiang T.Y."/>
            <person name="Kuo R.L."/>
            <person name="Krug R.M."/>
        </authorList>
    </citation>
    <scope>FUNCTION</scope>
    <scope>INTERACTION WITH INFLUENZA A VIRUS NS1</scope>
</reference>
<reference key="12">
    <citation type="journal article" date="2011" name="Retrovirology">
        <title>Human HERC5 restricts an early stage of HIV-1 assembly by a mechanism correlating with the ISGylation of Gag.</title>
        <authorList>
            <person name="Woods M.W."/>
            <person name="Kelly J.N."/>
            <person name="Hattlmann C.J."/>
            <person name="Tong J.G."/>
            <person name="Xu L.S."/>
            <person name="Coleman M.D."/>
            <person name="Quest G.R."/>
            <person name="Smiley J.R."/>
            <person name="Barr S.D."/>
        </authorList>
    </citation>
    <scope>FUNCTION</scope>
    <scope>SUBCELLULAR LOCATION</scope>
    <scope>MUTAGENESIS OF CYS-994</scope>
</reference>
<reference key="13">
    <citation type="journal article" date="2015" name="J. Virol.">
        <title>Kaposi's Sarcoma-Associated Herpesvirus Viral Interferon Regulatory Factor 1 Interacts with a Member of the Interferon-Stimulated Gene 15 Pathway.</title>
        <authorList>
            <person name="Jacobs S.R."/>
            <person name="Stopford C.M."/>
            <person name="West J.A."/>
            <person name="Bennett C.L."/>
            <person name="Giffin L."/>
            <person name="Damania B."/>
        </authorList>
    </citation>
    <scope>FUNCTION</scope>
    <scope>INTERACTION WITH KAPOSI'S SARCOMA-ASSOCIATED HERPESVIRUS PROTEIN VIRF-1 (MICROBIAL INFECTION)</scope>
</reference>
<reference key="14">
    <citation type="journal article" date="2016" name="PLoS Pathog.">
        <title>Consecutive Inhibition of ISG15 Expression and ISGylation by Cytomegalovirus Regulators.</title>
        <authorList>
            <person name="Kim Y.J."/>
            <person name="Kim E.T."/>
            <person name="Kim Y.E."/>
            <person name="Lee M.K."/>
            <person name="Kwon K.M."/>
            <person name="Kim K.I."/>
            <person name="Stamminger T."/>
            <person name="Ahn J.H."/>
        </authorList>
    </citation>
    <scope>FUNCTION</scope>
    <scope>INTERACTION WITH HUMAN CYTOMEGALOVIRUS PROTEIN UL26 (MICROBIAL INFECTION)</scope>
</reference>
<reference key="15">
    <citation type="journal article" date="2016" name="Open Biol.">
        <title>Covalent ISG15 conjugation positively regulates the ubiquitin E3 ligase activity of parkin.</title>
        <authorList>
            <person name="Im E."/>
            <person name="Yoo L."/>
            <person name="Hyun M."/>
            <person name="Shin W.H."/>
            <person name="Chung K.C."/>
        </authorList>
    </citation>
    <scope>FUNCTION</scope>
    <scope>CATALYTIC ACTIVITY</scope>
</reference>
<reference key="16">
    <citation type="journal article" date="2021" name="J. Gen. Virol.">
        <title>HERC5 E3 ligase mediates ISGylation of hepatitis B virus X protein to promote viral replication.</title>
        <authorList>
            <person name="Bawono R.G."/>
            <person name="Abe T."/>
            <person name="Qu M."/>
            <person name="Kuroki D."/>
            <person name="Deng L."/>
            <person name="Matsui C."/>
            <person name="Ryo A."/>
            <person name="Suzuki T."/>
            <person name="Matsuura Y."/>
            <person name="Sugiyama M."/>
            <person name="Mizokami M."/>
            <person name="Shimotohno K."/>
            <person name="Shoji I."/>
        </authorList>
    </citation>
    <scope>FUNCTION (MICROBIAL INFECTION)</scope>
    <scope>MUTAGENESIS OF CYS-994</scope>
</reference>
<reference key="17">
    <citation type="journal article" date="2021" name="Cells">
        <title>Interferon-Induced HERC5 Inhibits Ebola Virus Particle Production and Is Antagonized by Ebola Glycoprotein.</title>
        <authorList>
            <person name="Paparisto E."/>
            <person name="Hunt N.R."/>
            <person name="Labach D.S."/>
            <person name="Coleman M.D."/>
            <person name="Di Gravio E.J."/>
            <person name="Dodge M.J."/>
            <person name="Friesen N.J."/>
            <person name="Cote M."/>
            <person name="Mueller A."/>
            <person name="Hoenen T."/>
            <person name="Barr S.D."/>
        </authorList>
    </citation>
    <scope>FUNCTION</scope>
    <scope>CATALYTIC ACTIVITY</scope>
</reference>
<reference key="18">
    <citation type="journal article" date="2023" name="Sci. Signal.">
        <title>The E3 ligase HERC5 promotes antimycobacterial responses in macrophages by ISGylating the phosphatase PTEN.</title>
        <authorList>
            <person name="Du X."/>
            <person name="Sheng J."/>
            <person name="Chen Y."/>
            <person name="He S."/>
            <person name="Yang Y."/>
            <person name="Huang Y."/>
            <person name="Fu Y."/>
            <person name="Lie L."/>
            <person name="Han Z."/>
            <person name="Zhu B."/>
            <person name="Liu H."/>
            <person name="Wen Q."/>
            <person name="Zhou X."/>
            <person name="Zhou C."/>
            <person name="Hu S."/>
            <person name="Ma L."/>
        </authorList>
    </citation>
    <scope>FUNCTION</scope>
    <scope>CATALYTIC ACTIVITY</scope>
</reference>
<organism>
    <name type="scientific">Homo sapiens</name>
    <name type="common">Human</name>
    <dbReference type="NCBI Taxonomy" id="9606"/>
    <lineage>
        <taxon>Eukaryota</taxon>
        <taxon>Metazoa</taxon>
        <taxon>Chordata</taxon>
        <taxon>Craniata</taxon>
        <taxon>Vertebrata</taxon>
        <taxon>Euteleostomi</taxon>
        <taxon>Mammalia</taxon>
        <taxon>Eutheria</taxon>
        <taxon>Euarchontoglires</taxon>
        <taxon>Primates</taxon>
        <taxon>Haplorrhini</taxon>
        <taxon>Catarrhini</taxon>
        <taxon>Hominidae</taxon>
        <taxon>Homo</taxon>
    </lineage>
</organism>
<accession>Q9UII4</accession>
<accession>B2RTQ1</accession>
<accession>Q69G20</accession>